<keyword id="KW-0233">DNA recombination</keyword>
<keyword id="KW-0238">DNA-binding</keyword>
<keyword id="KW-1185">Reference proteome</keyword>
<keyword id="KW-0804">Transcription</keyword>
<keyword id="KW-0805">Transcription regulation</keyword>
<keyword id="KW-0810">Translation regulation</keyword>
<reference key="1">
    <citation type="submission" date="2007-07" db="EMBL/GenBank/DDBJ databases">
        <title>Complete sequence of chromosome of Xanthobacter autotrophicus Py2.</title>
        <authorList>
            <consortium name="US DOE Joint Genome Institute"/>
            <person name="Copeland A."/>
            <person name="Lucas S."/>
            <person name="Lapidus A."/>
            <person name="Barry K."/>
            <person name="Glavina del Rio T."/>
            <person name="Hammon N."/>
            <person name="Israni S."/>
            <person name="Dalin E."/>
            <person name="Tice H."/>
            <person name="Pitluck S."/>
            <person name="Sims D."/>
            <person name="Brettin T."/>
            <person name="Bruce D."/>
            <person name="Detter J.C."/>
            <person name="Han C."/>
            <person name="Tapia R."/>
            <person name="Brainard J."/>
            <person name="Schmutz J."/>
            <person name="Larimer F."/>
            <person name="Land M."/>
            <person name="Hauser L."/>
            <person name="Kyrpides N."/>
            <person name="Kim E."/>
            <person name="Ensigns S.A."/>
            <person name="Richardson P."/>
        </authorList>
    </citation>
    <scope>NUCLEOTIDE SEQUENCE [LARGE SCALE GENOMIC DNA]</scope>
    <source>
        <strain>ATCC BAA-1158 / Py2</strain>
    </source>
</reference>
<evidence type="ECO:0000255" key="1">
    <source>
        <dbReference type="HAMAP-Rule" id="MF_00381"/>
    </source>
</evidence>
<accession>A7IHH0</accession>
<dbReference type="EMBL" id="CP000781">
    <property type="protein sequence ID" value="ABS67463.1"/>
    <property type="molecule type" value="Genomic_DNA"/>
</dbReference>
<dbReference type="SMR" id="A7IHH0"/>
<dbReference type="STRING" id="78245.Xaut_2219"/>
<dbReference type="KEGG" id="xau:Xaut_2219"/>
<dbReference type="eggNOG" id="COG0776">
    <property type="taxonomic scope" value="Bacteria"/>
</dbReference>
<dbReference type="HOGENOM" id="CLU_105066_2_0_5"/>
<dbReference type="OrthoDB" id="9804203at2"/>
<dbReference type="PhylomeDB" id="A7IHH0"/>
<dbReference type="Proteomes" id="UP000002417">
    <property type="component" value="Chromosome"/>
</dbReference>
<dbReference type="GO" id="GO:0005694">
    <property type="term" value="C:chromosome"/>
    <property type="evidence" value="ECO:0007669"/>
    <property type="project" value="InterPro"/>
</dbReference>
<dbReference type="GO" id="GO:0005829">
    <property type="term" value="C:cytosol"/>
    <property type="evidence" value="ECO:0007669"/>
    <property type="project" value="TreeGrafter"/>
</dbReference>
<dbReference type="GO" id="GO:0003677">
    <property type="term" value="F:DNA binding"/>
    <property type="evidence" value="ECO:0007669"/>
    <property type="project" value="UniProtKB-UniRule"/>
</dbReference>
<dbReference type="GO" id="GO:0030527">
    <property type="term" value="F:structural constituent of chromatin"/>
    <property type="evidence" value="ECO:0007669"/>
    <property type="project" value="InterPro"/>
</dbReference>
<dbReference type="GO" id="GO:0006310">
    <property type="term" value="P:DNA recombination"/>
    <property type="evidence" value="ECO:0007669"/>
    <property type="project" value="UniProtKB-UniRule"/>
</dbReference>
<dbReference type="GO" id="GO:0006355">
    <property type="term" value="P:regulation of DNA-templated transcription"/>
    <property type="evidence" value="ECO:0007669"/>
    <property type="project" value="UniProtKB-UniRule"/>
</dbReference>
<dbReference type="GO" id="GO:0006417">
    <property type="term" value="P:regulation of translation"/>
    <property type="evidence" value="ECO:0007669"/>
    <property type="project" value="UniProtKB-UniRule"/>
</dbReference>
<dbReference type="CDD" id="cd13836">
    <property type="entry name" value="IHF_B"/>
    <property type="match status" value="1"/>
</dbReference>
<dbReference type="FunFam" id="4.10.520.10:FF:000008">
    <property type="entry name" value="Integration host factor subunit beta"/>
    <property type="match status" value="1"/>
</dbReference>
<dbReference type="Gene3D" id="4.10.520.10">
    <property type="entry name" value="IHF-like DNA-binding proteins"/>
    <property type="match status" value="1"/>
</dbReference>
<dbReference type="HAMAP" id="MF_00381">
    <property type="entry name" value="IHF_beta"/>
    <property type="match status" value="1"/>
</dbReference>
<dbReference type="InterPro" id="IPR000119">
    <property type="entry name" value="Hist_DNA-bd"/>
</dbReference>
<dbReference type="InterPro" id="IPR020816">
    <property type="entry name" value="Histone-like_DNA-bd_CS"/>
</dbReference>
<dbReference type="InterPro" id="IPR010992">
    <property type="entry name" value="IHF-like_DNA-bd_dom_sf"/>
</dbReference>
<dbReference type="InterPro" id="IPR005685">
    <property type="entry name" value="IHF_beta"/>
</dbReference>
<dbReference type="NCBIfam" id="TIGR00988">
    <property type="entry name" value="hip"/>
    <property type="match status" value="1"/>
</dbReference>
<dbReference type="NCBIfam" id="NF001222">
    <property type="entry name" value="PRK00199.1"/>
    <property type="match status" value="1"/>
</dbReference>
<dbReference type="PANTHER" id="PTHR33175">
    <property type="entry name" value="DNA-BINDING PROTEIN HU"/>
    <property type="match status" value="1"/>
</dbReference>
<dbReference type="PANTHER" id="PTHR33175:SF5">
    <property type="entry name" value="INTEGRATION HOST FACTOR SUBUNIT BETA"/>
    <property type="match status" value="1"/>
</dbReference>
<dbReference type="Pfam" id="PF00216">
    <property type="entry name" value="Bac_DNA_binding"/>
    <property type="match status" value="1"/>
</dbReference>
<dbReference type="PRINTS" id="PR01727">
    <property type="entry name" value="DNABINDINGHU"/>
</dbReference>
<dbReference type="SMART" id="SM00411">
    <property type="entry name" value="BHL"/>
    <property type="match status" value="1"/>
</dbReference>
<dbReference type="SUPFAM" id="SSF47729">
    <property type="entry name" value="IHF-like DNA-binding proteins"/>
    <property type="match status" value="1"/>
</dbReference>
<dbReference type="PROSITE" id="PS00045">
    <property type="entry name" value="HISTONE_LIKE"/>
    <property type="match status" value="1"/>
</dbReference>
<comment type="function">
    <text evidence="1">This protein is one of the two subunits of integration host factor, a specific DNA-binding protein that functions in genetic recombination as well as in transcriptional and translational control.</text>
</comment>
<comment type="subunit">
    <text evidence="1">Heterodimer of an alpha and a beta chain.</text>
</comment>
<comment type="similarity">
    <text evidence="1">Belongs to the bacterial histone-like protein family.</text>
</comment>
<protein>
    <recommendedName>
        <fullName evidence="1">Integration host factor subunit beta</fullName>
        <shortName evidence="1">IHF-beta</shortName>
    </recommendedName>
</protein>
<name>IHFB_XANP2</name>
<sequence length="94" mass="10670">MIKSELVQKIAEANPHLYQRDVENIVNAILEQVASALERGDRVELRGFGAFSVKKRDARVGRNPRTGKQVDVSEKTVPYFKTGKEMRERLNTGK</sequence>
<organism>
    <name type="scientific">Xanthobacter autotrophicus (strain ATCC BAA-1158 / Py2)</name>
    <dbReference type="NCBI Taxonomy" id="78245"/>
    <lineage>
        <taxon>Bacteria</taxon>
        <taxon>Pseudomonadati</taxon>
        <taxon>Pseudomonadota</taxon>
        <taxon>Alphaproteobacteria</taxon>
        <taxon>Hyphomicrobiales</taxon>
        <taxon>Xanthobacteraceae</taxon>
        <taxon>Xanthobacter</taxon>
    </lineage>
</organism>
<proteinExistence type="inferred from homology"/>
<feature type="chain" id="PRO_1000122250" description="Integration host factor subunit beta">
    <location>
        <begin position="1"/>
        <end position="94"/>
    </location>
</feature>
<gene>
    <name evidence="1" type="primary">ihfB</name>
    <name evidence="1" type="synonym">himD</name>
    <name type="ordered locus">Xaut_2219</name>
</gene>